<organismHost>
    <name type="scientific">Homo sapiens</name>
    <name type="common">Human</name>
    <dbReference type="NCBI Taxonomy" id="9606"/>
</organismHost>
<evidence type="ECO:0000250" key="1">
    <source>
        <dbReference type="UniProtKB" id="P24769"/>
    </source>
</evidence>
<evidence type="ECO:0000305" key="2"/>
<name>PG189_VAR67</name>
<proteinExistence type="inferred from homology"/>
<sequence length="558" mass="65173">MDFFKKEILDWSIYLSLHYIAHACSNSSTSHIIQEYNLIRTYKKVDKTIVDFLSRWPNLFHILEYGENILHIYSMDDANTNIIIFFLDNVLNINKNGSFIHNLGLSSSINIKEYVYQLVNNDHLDNGIRLMLENGRRTRHFLSYILDTVNIYICILINHGFYIDAVDSYGCTLLHRCIYHYKKSESESYNELIKILLNNGSDVDKKDTHGNTPFILLCKHDIDNVELFEICLENANIDSVDFNGYTPLHYVSCRNKYDFVKSLISKGANVNTRNRFGTTPFYCGIIHGISLIKLYLESDTELEIDNEHIVRHLIIFDAVESLDYLLFRGVIDINYRTIYNETSIYDAVSYNAYNMLVYLLNRNGDFETITTSGCTCISKAVANNNKIIMEVLLSKQPSLKIMILSIIAITKHKQHNTNLLKMCIKYTACMTDYDTLIDVQSLQQYKWYILKCFDEIDIMKRCYIKNKTVFQLVFCTKDINTLMRYGRHPSFVKYTSLDVYGSRVRNIIASIRYRQRLISLLSKKLDVGDKWACFPNEIKYKILENFNDNELSTYLKIL</sequence>
<accession>P0DSS9</accession>
<accession>P33823</accession>
<reference key="1">
    <citation type="journal article" date="1993" name="FEBS Lett.">
        <title>Genes of variola and vaccinia viruses necessary to overcome the host protective mechanisms.</title>
        <authorList>
            <person name="Shchelkunov S.N."/>
            <person name="Blinov V.M."/>
            <person name="Sandakhchiev L.S."/>
        </authorList>
    </citation>
    <scope>NUCLEOTIDE SEQUENCE [GENOMIC DNA]</scope>
</reference>
<organism>
    <name type="scientific">Variola virus (isolate Human/India/Ind3/1967)</name>
    <name type="common">VARV</name>
    <name type="synonym">Smallpox virus</name>
    <dbReference type="NCBI Taxonomy" id="587200"/>
    <lineage>
        <taxon>Viruses</taxon>
        <taxon>Varidnaviria</taxon>
        <taxon>Bamfordvirae</taxon>
        <taxon>Nucleocytoviricota</taxon>
        <taxon>Pokkesviricetes</taxon>
        <taxon>Chitovirales</taxon>
        <taxon>Poxviridae</taxon>
        <taxon>Chordopoxvirinae</taxon>
        <taxon>Orthopoxvirus</taxon>
        <taxon>Variola virus</taxon>
    </lineage>
</organism>
<feature type="chain" id="PRO_0000067086" description="Ankyrin repeat protein OPG189">
    <location>
        <begin position="1"/>
        <end position="558"/>
    </location>
</feature>
<feature type="repeat" description="ANK 1">
    <location>
        <begin position="65"/>
        <end position="95"/>
    </location>
</feature>
<feature type="repeat" description="ANK 2">
    <location>
        <begin position="169"/>
        <end position="205"/>
    </location>
</feature>
<feature type="repeat" description="ANK 3">
    <location>
        <begin position="209"/>
        <end position="239"/>
    </location>
</feature>
<feature type="repeat" description="ANK 4">
    <location>
        <begin position="243"/>
        <end position="272"/>
    </location>
</feature>
<feature type="repeat" description="ANK 5">
    <location>
        <begin position="276"/>
        <end position="304"/>
    </location>
</feature>
<feature type="repeat" description="ANK 6">
    <location>
        <begin position="339"/>
        <end position="368"/>
    </location>
</feature>
<feature type="repeat" description="ANK 7">
    <location>
        <begin position="372"/>
        <end position="401"/>
    </location>
</feature>
<keyword id="KW-0040">ANK repeat</keyword>
<keyword id="KW-1185">Reference proteome</keyword>
<keyword id="KW-0677">Repeat</keyword>
<dbReference type="EMBL" id="X69198">
    <property type="protein sequence ID" value="CAA49115.1"/>
    <property type="molecule type" value="Genomic_DNA"/>
</dbReference>
<dbReference type="PIR" id="F36855">
    <property type="entry name" value="F36855"/>
</dbReference>
<dbReference type="RefSeq" id="NP_042218.1">
    <property type="nucleotide sequence ID" value="NC_001611.1"/>
</dbReference>
<dbReference type="SMR" id="P0DSS9"/>
<dbReference type="GeneID" id="1486562"/>
<dbReference type="KEGG" id="vg:1486562"/>
<dbReference type="Proteomes" id="UP000002060">
    <property type="component" value="Segment"/>
</dbReference>
<dbReference type="Gene3D" id="1.25.40.20">
    <property type="entry name" value="Ankyrin repeat-containing domain"/>
    <property type="match status" value="2"/>
</dbReference>
<dbReference type="InterPro" id="IPR002110">
    <property type="entry name" value="Ankyrin_rpt"/>
</dbReference>
<dbReference type="InterPro" id="IPR036770">
    <property type="entry name" value="Ankyrin_rpt-contain_sf"/>
</dbReference>
<dbReference type="InterPro" id="IPR018272">
    <property type="entry name" value="PRANC_domain"/>
</dbReference>
<dbReference type="PANTHER" id="PTHR24126:SF14">
    <property type="entry name" value="ANK_REP_REGION DOMAIN-CONTAINING PROTEIN"/>
    <property type="match status" value="1"/>
</dbReference>
<dbReference type="PANTHER" id="PTHR24126">
    <property type="entry name" value="ANKYRIN REPEAT, PH AND SEC7 DOMAIN CONTAINING PROTEIN SECG-RELATED"/>
    <property type="match status" value="1"/>
</dbReference>
<dbReference type="Pfam" id="PF12796">
    <property type="entry name" value="Ank_2"/>
    <property type="match status" value="1"/>
</dbReference>
<dbReference type="Pfam" id="PF09372">
    <property type="entry name" value="PRANC"/>
    <property type="match status" value="1"/>
</dbReference>
<dbReference type="SMART" id="SM00248">
    <property type="entry name" value="ANK"/>
    <property type="match status" value="7"/>
</dbReference>
<dbReference type="SUPFAM" id="SSF48403">
    <property type="entry name" value="Ankyrin repeat"/>
    <property type="match status" value="1"/>
</dbReference>
<dbReference type="PROSITE" id="PS50297">
    <property type="entry name" value="ANK_REP_REGION"/>
    <property type="match status" value="1"/>
</dbReference>
<dbReference type="PROSITE" id="PS50088">
    <property type="entry name" value="ANK_REPEAT"/>
    <property type="match status" value="1"/>
</dbReference>
<protein>
    <recommendedName>
        <fullName>Ankyrin repeat protein OPG189</fullName>
    </recommendedName>
</protein>
<gene>
    <name type="primary">OPG189</name>
    <name type="ORF">B4R</name>
    <name type="ORF">B5R</name>
    <name type="ORF">B6R</name>
</gene>
<comment type="function">
    <text evidence="1">Contributes to viral release without involving rearrangement of host actin.</text>
</comment>
<comment type="similarity">
    <text evidence="2">Belongs to the orthopoxvirus OPG189 protein family.</text>
</comment>